<sequence length="146" mass="17189">MALLKKINTQVNRIMKNSSLVQNICFDRVPLFIPRLSLTVKYCLAVKLLIYLLYCWYIYSEVPSVSSKFRSFTFGCVVVYHNKFFPRFIRTHSINSIRTFSKFQVIILFSIEKVTRSESKNHSYSKTDISDLHQGYNNPPSRFISR</sequence>
<name>YHEH_SCHPO</name>
<organism>
    <name type="scientific">Schizosaccharomyces pombe (strain 972 / ATCC 24843)</name>
    <name type="common">Fission yeast</name>
    <dbReference type="NCBI Taxonomy" id="284812"/>
    <lineage>
        <taxon>Eukaryota</taxon>
        <taxon>Fungi</taxon>
        <taxon>Dikarya</taxon>
        <taxon>Ascomycota</taxon>
        <taxon>Taphrinomycotina</taxon>
        <taxon>Schizosaccharomycetes</taxon>
        <taxon>Schizosaccharomycetales</taxon>
        <taxon>Schizosaccharomycetaceae</taxon>
        <taxon>Schizosaccharomyces</taxon>
    </lineage>
</organism>
<accession>Q9HDU0</accession>
<feature type="chain" id="PRO_0000373864" description="UPF0742 protein PB2B2.17c">
    <location>
        <begin position="1"/>
        <end position="146"/>
    </location>
</feature>
<feature type="transmembrane region" description="Helical" evidence="1">
    <location>
        <begin position="38"/>
        <end position="60"/>
    </location>
</feature>
<dbReference type="EMBL" id="CU329671">
    <property type="protein sequence ID" value="CAC21419.1"/>
    <property type="molecule type" value="Genomic_DNA"/>
</dbReference>
<dbReference type="BioGRID" id="277918">
    <property type="interactions" value="18"/>
</dbReference>
<dbReference type="STRING" id="284812.Q9HDU0"/>
<dbReference type="PaxDb" id="4896-SPBPB2B2.17c.1"/>
<dbReference type="EnsemblFungi" id="SPBPB2B2.17c.1">
    <property type="protein sequence ID" value="SPBPB2B2.17c.1:pep"/>
    <property type="gene ID" value="SPBPB2B2.17c"/>
</dbReference>
<dbReference type="KEGG" id="spo:2541410"/>
<dbReference type="PomBase" id="SPBPB2B2.17c"/>
<dbReference type="VEuPathDB" id="FungiDB:SPBPB2B2.17c"/>
<dbReference type="HOGENOM" id="CLU_1778552_0_0_1"/>
<dbReference type="InParanoid" id="Q9HDU0"/>
<dbReference type="PhylomeDB" id="Q9HDU0"/>
<dbReference type="PRO" id="PR:Q9HDU0"/>
<dbReference type="Proteomes" id="UP000002485">
    <property type="component" value="Chromosome II"/>
</dbReference>
<dbReference type="GO" id="GO:0005737">
    <property type="term" value="C:cytoplasm"/>
    <property type="evidence" value="ECO:0007669"/>
    <property type="project" value="UniProtKB-SubCell"/>
</dbReference>
<dbReference type="GO" id="GO:0012505">
    <property type="term" value="C:endomembrane system"/>
    <property type="evidence" value="ECO:0000314"/>
    <property type="project" value="PomBase"/>
</dbReference>
<dbReference type="GO" id="GO:0031965">
    <property type="term" value="C:nuclear membrane"/>
    <property type="evidence" value="ECO:0007669"/>
    <property type="project" value="UniProtKB-SubCell"/>
</dbReference>
<dbReference type="InterPro" id="IPR018291">
    <property type="entry name" value="5TM-prot_SCHPO"/>
</dbReference>
<dbReference type="Pfam" id="PF09437">
    <property type="entry name" value="Pombe_5TM"/>
    <property type="match status" value="2"/>
</dbReference>
<comment type="subcellular location">
    <subcellularLocation>
        <location evidence="2">Cytoplasm</location>
    </subcellularLocation>
    <subcellularLocation>
        <location evidence="3">Nucleus membrane</location>
        <topology evidence="3">Single-pass membrane protein</topology>
    </subcellularLocation>
    <text>Localizes to cytoplasmic dots and the nuclear envelope.</text>
</comment>
<comment type="similarity">
    <text evidence="3">Belongs to the UPF0742 family.</text>
</comment>
<gene>
    <name type="ORF">SPBPB2B2.17c</name>
</gene>
<keyword id="KW-0963">Cytoplasm</keyword>
<keyword id="KW-0472">Membrane</keyword>
<keyword id="KW-0539">Nucleus</keyword>
<keyword id="KW-1185">Reference proteome</keyword>
<keyword id="KW-0812">Transmembrane</keyword>
<keyword id="KW-1133">Transmembrane helix</keyword>
<protein>
    <recommendedName>
        <fullName>UPF0742 protein PB2B2.17c</fullName>
    </recommendedName>
</protein>
<reference key="1">
    <citation type="journal article" date="2002" name="Nature">
        <title>The genome sequence of Schizosaccharomyces pombe.</title>
        <authorList>
            <person name="Wood V."/>
            <person name="Gwilliam R."/>
            <person name="Rajandream M.A."/>
            <person name="Lyne M.H."/>
            <person name="Lyne R."/>
            <person name="Stewart A."/>
            <person name="Sgouros J.G."/>
            <person name="Peat N."/>
            <person name="Hayles J."/>
            <person name="Baker S.G."/>
            <person name="Basham D."/>
            <person name="Bowman S."/>
            <person name="Brooks K."/>
            <person name="Brown D."/>
            <person name="Brown S."/>
            <person name="Chillingworth T."/>
            <person name="Churcher C.M."/>
            <person name="Collins M."/>
            <person name="Connor R."/>
            <person name="Cronin A."/>
            <person name="Davis P."/>
            <person name="Feltwell T."/>
            <person name="Fraser A."/>
            <person name="Gentles S."/>
            <person name="Goble A."/>
            <person name="Hamlin N."/>
            <person name="Harris D.E."/>
            <person name="Hidalgo J."/>
            <person name="Hodgson G."/>
            <person name="Holroyd S."/>
            <person name="Hornsby T."/>
            <person name="Howarth S."/>
            <person name="Huckle E.J."/>
            <person name="Hunt S."/>
            <person name="Jagels K."/>
            <person name="James K.D."/>
            <person name="Jones L."/>
            <person name="Jones M."/>
            <person name="Leather S."/>
            <person name="McDonald S."/>
            <person name="McLean J."/>
            <person name="Mooney P."/>
            <person name="Moule S."/>
            <person name="Mungall K.L."/>
            <person name="Murphy L.D."/>
            <person name="Niblett D."/>
            <person name="Odell C."/>
            <person name="Oliver K."/>
            <person name="O'Neil S."/>
            <person name="Pearson D."/>
            <person name="Quail M.A."/>
            <person name="Rabbinowitsch E."/>
            <person name="Rutherford K.M."/>
            <person name="Rutter S."/>
            <person name="Saunders D."/>
            <person name="Seeger K."/>
            <person name="Sharp S."/>
            <person name="Skelton J."/>
            <person name="Simmonds M.N."/>
            <person name="Squares R."/>
            <person name="Squares S."/>
            <person name="Stevens K."/>
            <person name="Taylor K."/>
            <person name="Taylor R.G."/>
            <person name="Tivey A."/>
            <person name="Walsh S.V."/>
            <person name="Warren T."/>
            <person name="Whitehead S."/>
            <person name="Woodward J.R."/>
            <person name="Volckaert G."/>
            <person name="Aert R."/>
            <person name="Robben J."/>
            <person name="Grymonprez B."/>
            <person name="Weltjens I."/>
            <person name="Vanstreels E."/>
            <person name="Rieger M."/>
            <person name="Schaefer M."/>
            <person name="Mueller-Auer S."/>
            <person name="Gabel C."/>
            <person name="Fuchs M."/>
            <person name="Duesterhoeft A."/>
            <person name="Fritzc C."/>
            <person name="Holzer E."/>
            <person name="Moestl D."/>
            <person name="Hilbert H."/>
            <person name="Borzym K."/>
            <person name="Langer I."/>
            <person name="Beck A."/>
            <person name="Lehrach H."/>
            <person name="Reinhardt R."/>
            <person name="Pohl T.M."/>
            <person name="Eger P."/>
            <person name="Zimmermann W."/>
            <person name="Wedler H."/>
            <person name="Wambutt R."/>
            <person name="Purnelle B."/>
            <person name="Goffeau A."/>
            <person name="Cadieu E."/>
            <person name="Dreano S."/>
            <person name="Gloux S."/>
            <person name="Lelaure V."/>
            <person name="Mottier S."/>
            <person name="Galibert F."/>
            <person name="Aves S.J."/>
            <person name="Xiang Z."/>
            <person name="Hunt C."/>
            <person name="Moore K."/>
            <person name="Hurst S.M."/>
            <person name="Lucas M."/>
            <person name="Rochet M."/>
            <person name="Gaillardin C."/>
            <person name="Tallada V.A."/>
            <person name="Garzon A."/>
            <person name="Thode G."/>
            <person name="Daga R.R."/>
            <person name="Cruzado L."/>
            <person name="Jimenez J."/>
            <person name="Sanchez M."/>
            <person name="del Rey F."/>
            <person name="Benito J."/>
            <person name="Dominguez A."/>
            <person name="Revuelta J.L."/>
            <person name="Moreno S."/>
            <person name="Armstrong J."/>
            <person name="Forsburg S.L."/>
            <person name="Cerutti L."/>
            <person name="Lowe T."/>
            <person name="McCombie W.R."/>
            <person name="Paulsen I."/>
            <person name="Potashkin J."/>
            <person name="Shpakovski G.V."/>
            <person name="Ussery D."/>
            <person name="Barrell B.G."/>
            <person name="Nurse P."/>
        </authorList>
    </citation>
    <scope>NUCLEOTIDE SEQUENCE [LARGE SCALE GENOMIC DNA]</scope>
    <source>
        <strain>972 / ATCC 24843</strain>
    </source>
</reference>
<reference key="2">
    <citation type="journal article" date="2006" name="Nat. Biotechnol.">
        <title>ORFeome cloning and global analysis of protein localization in the fission yeast Schizosaccharomyces pombe.</title>
        <authorList>
            <person name="Matsuyama A."/>
            <person name="Arai R."/>
            <person name="Yashiroda Y."/>
            <person name="Shirai A."/>
            <person name="Kamata A."/>
            <person name="Sekido S."/>
            <person name="Kobayashi Y."/>
            <person name="Hashimoto A."/>
            <person name="Hamamoto M."/>
            <person name="Hiraoka Y."/>
            <person name="Horinouchi S."/>
            <person name="Yoshida M."/>
        </authorList>
    </citation>
    <scope>SUBCELLULAR LOCATION [LARGE SCALE ANALYSIS]</scope>
</reference>
<proteinExistence type="inferred from homology"/>
<evidence type="ECO:0000255" key="1"/>
<evidence type="ECO:0000269" key="2">
    <source>
    </source>
</evidence>
<evidence type="ECO:0000305" key="3"/>